<accession>O74539</accession>
<organism>
    <name type="scientific">Schizosaccharomyces pombe (strain 972 / ATCC 24843)</name>
    <name type="common">Fission yeast</name>
    <dbReference type="NCBI Taxonomy" id="284812"/>
    <lineage>
        <taxon>Eukaryota</taxon>
        <taxon>Fungi</taxon>
        <taxon>Dikarya</taxon>
        <taxon>Ascomycota</taxon>
        <taxon>Taphrinomycotina</taxon>
        <taxon>Schizosaccharomycetes</taxon>
        <taxon>Schizosaccharomycetales</taxon>
        <taxon>Schizosaccharomycetaceae</taxon>
        <taxon>Schizosaccharomyces</taxon>
    </lineage>
</organism>
<protein>
    <recommendedName>
        <fullName>Peroxide stress-activated histidine kinase mak3</fullName>
        <ecNumber>2.7.13.3</ecNumber>
    </recommendedName>
    <alternativeName>
        <fullName>His-Asp phosphorelay kinase phk2</fullName>
    </alternativeName>
    <alternativeName>
        <fullName>Mcs4-associated kinase 3</fullName>
    </alternativeName>
</protein>
<dbReference type="EC" id="2.7.13.3"/>
<dbReference type="EMBL" id="CU329672">
    <property type="protein sequence ID" value="CAA20836.1"/>
    <property type="molecule type" value="Genomic_DNA"/>
</dbReference>
<dbReference type="PIR" id="T41590">
    <property type="entry name" value="T41590"/>
</dbReference>
<dbReference type="RefSeq" id="NP_588379.1">
    <property type="nucleotide sequence ID" value="NM_001023370.2"/>
</dbReference>
<dbReference type="SMR" id="O74539"/>
<dbReference type="BioGRID" id="275689">
    <property type="interactions" value="48"/>
</dbReference>
<dbReference type="IntAct" id="O74539">
    <property type="interactions" value="1"/>
</dbReference>
<dbReference type="STRING" id="284812.O74539"/>
<dbReference type="iPTMnet" id="O74539"/>
<dbReference type="PaxDb" id="4896-SPCC74.06.1"/>
<dbReference type="EnsemblFungi" id="SPCC74.06.1">
    <property type="protein sequence ID" value="SPCC74.06.1:pep"/>
    <property type="gene ID" value="SPCC74.06"/>
</dbReference>
<dbReference type="GeneID" id="2539117"/>
<dbReference type="KEGG" id="spo:2539117"/>
<dbReference type="PomBase" id="SPCC74.06">
    <property type="gene designation" value="mak3"/>
</dbReference>
<dbReference type="VEuPathDB" id="FungiDB:SPCC74.06"/>
<dbReference type="eggNOG" id="KOG0519">
    <property type="taxonomic scope" value="Eukaryota"/>
</dbReference>
<dbReference type="HOGENOM" id="CLU_000400_0_0_1"/>
<dbReference type="InParanoid" id="O74539"/>
<dbReference type="OMA" id="QLPGYTW"/>
<dbReference type="PhylomeDB" id="O74539"/>
<dbReference type="PRO" id="PR:O74539"/>
<dbReference type="Proteomes" id="UP000002485">
    <property type="component" value="Chromosome III"/>
</dbReference>
<dbReference type="GO" id="GO:0005737">
    <property type="term" value="C:cytoplasm"/>
    <property type="evidence" value="ECO:0000314"/>
    <property type="project" value="PomBase"/>
</dbReference>
<dbReference type="GO" id="GO:0005829">
    <property type="term" value="C:cytosol"/>
    <property type="evidence" value="ECO:0007005"/>
    <property type="project" value="PomBase"/>
</dbReference>
<dbReference type="GO" id="GO:0009365">
    <property type="term" value="C:protein histidine kinase complex"/>
    <property type="evidence" value="ECO:0000314"/>
    <property type="project" value="PomBase"/>
</dbReference>
<dbReference type="GO" id="GO:0005524">
    <property type="term" value="F:ATP binding"/>
    <property type="evidence" value="ECO:0007669"/>
    <property type="project" value="UniProtKB-KW"/>
</dbReference>
<dbReference type="GO" id="GO:0000155">
    <property type="term" value="F:phosphorelay sensor kinase activity"/>
    <property type="evidence" value="ECO:0000316"/>
    <property type="project" value="PomBase"/>
</dbReference>
<dbReference type="GO" id="GO:0000160">
    <property type="term" value="P:phosphorelay signal transduction system"/>
    <property type="evidence" value="ECO:0000316"/>
    <property type="project" value="PomBase"/>
</dbReference>
<dbReference type="GO" id="GO:1900745">
    <property type="term" value="P:positive regulation of p38MAPK cascade"/>
    <property type="evidence" value="ECO:0000315"/>
    <property type="project" value="PomBase"/>
</dbReference>
<dbReference type="CDD" id="cd16938">
    <property type="entry name" value="HATPase_ETR2_ERS2-EIN4-like"/>
    <property type="match status" value="1"/>
</dbReference>
<dbReference type="CDD" id="cd00082">
    <property type="entry name" value="HisKA"/>
    <property type="match status" value="1"/>
</dbReference>
<dbReference type="CDD" id="cd00130">
    <property type="entry name" value="PAS"/>
    <property type="match status" value="1"/>
</dbReference>
<dbReference type="CDD" id="cd17546">
    <property type="entry name" value="REC_hyHK_CKI1_RcsC-like"/>
    <property type="match status" value="1"/>
</dbReference>
<dbReference type="FunFam" id="3.30.450.40:FF:000044">
    <property type="entry name" value="Putative sensor histidine kinase/response regulator"/>
    <property type="match status" value="1"/>
</dbReference>
<dbReference type="FunFam" id="3.30.450.20:FF:000099">
    <property type="entry name" value="Sensory box sensor histidine kinase"/>
    <property type="match status" value="1"/>
</dbReference>
<dbReference type="FunFam" id="1.10.287.130:FF:000002">
    <property type="entry name" value="Two-component osmosensing histidine kinase"/>
    <property type="match status" value="1"/>
</dbReference>
<dbReference type="Gene3D" id="1.10.287.130">
    <property type="match status" value="1"/>
</dbReference>
<dbReference type="Gene3D" id="3.30.450.40">
    <property type="match status" value="1"/>
</dbReference>
<dbReference type="Gene3D" id="3.40.50.2300">
    <property type="match status" value="1"/>
</dbReference>
<dbReference type="Gene3D" id="3.30.565.10">
    <property type="entry name" value="Histidine kinase-like ATPase, C-terminal domain"/>
    <property type="match status" value="1"/>
</dbReference>
<dbReference type="Gene3D" id="3.30.450.20">
    <property type="entry name" value="PAS domain"/>
    <property type="match status" value="1"/>
</dbReference>
<dbReference type="Gene3D" id="1.10.510.10">
    <property type="entry name" value="Transferase(Phosphotransferase) domain 1"/>
    <property type="match status" value="1"/>
</dbReference>
<dbReference type="InterPro" id="IPR050956">
    <property type="entry name" value="2C_system_His_kinase"/>
</dbReference>
<dbReference type="InterPro" id="IPR041664">
    <property type="entry name" value="AAA_16"/>
</dbReference>
<dbReference type="InterPro" id="IPR011006">
    <property type="entry name" value="CheY-like_superfamily"/>
</dbReference>
<dbReference type="InterPro" id="IPR003018">
    <property type="entry name" value="GAF"/>
</dbReference>
<dbReference type="InterPro" id="IPR029016">
    <property type="entry name" value="GAF-like_dom_sf"/>
</dbReference>
<dbReference type="InterPro" id="IPR036890">
    <property type="entry name" value="HATPase_C_sf"/>
</dbReference>
<dbReference type="InterPro" id="IPR005467">
    <property type="entry name" value="His_kinase_dom"/>
</dbReference>
<dbReference type="InterPro" id="IPR003661">
    <property type="entry name" value="HisK_dim/P_dom"/>
</dbReference>
<dbReference type="InterPro" id="IPR036097">
    <property type="entry name" value="HisK_dim/P_sf"/>
</dbReference>
<dbReference type="InterPro" id="IPR011009">
    <property type="entry name" value="Kinase-like_dom_sf"/>
</dbReference>
<dbReference type="InterPro" id="IPR027417">
    <property type="entry name" value="P-loop_NTPase"/>
</dbReference>
<dbReference type="InterPro" id="IPR001610">
    <property type="entry name" value="PAC"/>
</dbReference>
<dbReference type="InterPro" id="IPR000014">
    <property type="entry name" value="PAS"/>
</dbReference>
<dbReference type="InterPro" id="IPR000700">
    <property type="entry name" value="PAS-assoc_C"/>
</dbReference>
<dbReference type="InterPro" id="IPR035965">
    <property type="entry name" value="PAS-like_dom_sf"/>
</dbReference>
<dbReference type="InterPro" id="IPR013655">
    <property type="entry name" value="PAS_fold_3"/>
</dbReference>
<dbReference type="InterPro" id="IPR000719">
    <property type="entry name" value="Prot_kinase_dom"/>
</dbReference>
<dbReference type="InterPro" id="IPR001789">
    <property type="entry name" value="Sig_transdc_resp-reg_receiver"/>
</dbReference>
<dbReference type="PANTHER" id="PTHR43719:SF28">
    <property type="entry name" value="PEROXIDE STRESS-ACTIVATED HISTIDINE KINASE MAK1-RELATED"/>
    <property type="match status" value="1"/>
</dbReference>
<dbReference type="PANTHER" id="PTHR43719">
    <property type="entry name" value="TWO-COMPONENT HISTIDINE KINASE"/>
    <property type="match status" value="1"/>
</dbReference>
<dbReference type="Pfam" id="PF13191">
    <property type="entry name" value="AAA_16"/>
    <property type="match status" value="1"/>
</dbReference>
<dbReference type="Pfam" id="PF13185">
    <property type="entry name" value="GAF_2"/>
    <property type="match status" value="1"/>
</dbReference>
<dbReference type="Pfam" id="PF00512">
    <property type="entry name" value="HisKA"/>
    <property type="match status" value="1"/>
</dbReference>
<dbReference type="Pfam" id="PF08447">
    <property type="entry name" value="PAS_3"/>
    <property type="match status" value="1"/>
</dbReference>
<dbReference type="Pfam" id="PF00069">
    <property type="entry name" value="Pkinase"/>
    <property type="match status" value="1"/>
</dbReference>
<dbReference type="Pfam" id="PF00072">
    <property type="entry name" value="Response_reg"/>
    <property type="match status" value="1"/>
</dbReference>
<dbReference type="SMART" id="SM00388">
    <property type="entry name" value="HisKA"/>
    <property type="match status" value="1"/>
</dbReference>
<dbReference type="SMART" id="SM00086">
    <property type="entry name" value="PAC"/>
    <property type="match status" value="1"/>
</dbReference>
<dbReference type="SMART" id="SM00448">
    <property type="entry name" value="REC"/>
    <property type="match status" value="1"/>
</dbReference>
<dbReference type="SMART" id="SM00220">
    <property type="entry name" value="S_TKc"/>
    <property type="match status" value="1"/>
</dbReference>
<dbReference type="SUPFAM" id="SSF55874">
    <property type="entry name" value="ATPase domain of HSP90 chaperone/DNA topoisomerase II/histidine kinase"/>
    <property type="match status" value="1"/>
</dbReference>
<dbReference type="SUPFAM" id="SSF52172">
    <property type="entry name" value="CheY-like"/>
    <property type="match status" value="1"/>
</dbReference>
<dbReference type="SUPFAM" id="SSF55781">
    <property type="entry name" value="GAF domain-like"/>
    <property type="match status" value="1"/>
</dbReference>
<dbReference type="SUPFAM" id="SSF47384">
    <property type="entry name" value="Homodimeric domain of signal transducing histidine kinase"/>
    <property type="match status" value="1"/>
</dbReference>
<dbReference type="SUPFAM" id="SSF52540">
    <property type="entry name" value="P-loop containing nucleoside triphosphate hydrolases"/>
    <property type="match status" value="1"/>
</dbReference>
<dbReference type="SUPFAM" id="SSF56112">
    <property type="entry name" value="Protein kinase-like (PK-like)"/>
    <property type="match status" value="1"/>
</dbReference>
<dbReference type="SUPFAM" id="SSF55785">
    <property type="entry name" value="PYP-like sensor domain (PAS domain)"/>
    <property type="match status" value="1"/>
</dbReference>
<dbReference type="PROSITE" id="PS50109">
    <property type="entry name" value="HIS_KIN"/>
    <property type="match status" value="1"/>
</dbReference>
<dbReference type="PROSITE" id="PS50113">
    <property type="entry name" value="PAC"/>
    <property type="match status" value="1"/>
</dbReference>
<dbReference type="PROSITE" id="PS50011">
    <property type="entry name" value="PROTEIN_KINASE_DOM"/>
    <property type="match status" value="1"/>
</dbReference>
<dbReference type="PROSITE" id="PS50110">
    <property type="entry name" value="RESPONSE_REGULATORY"/>
    <property type="match status" value="1"/>
</dbReference>
<reference key="1">
    <citation type="journal article" date="2002" name="Nature">
        <title>The genome sequence of Schizosaccharomyces pombe.</title>
        <authorList>
            <person name="Wood V."/>
            <person name="Gwilliam R."/>
            <person name="Rajandream M.A."/>
            <person name="Lyne M.H."/>
            <person name="Lyne R."/>
            <person name="Stewart A."/>
            <person name="Sgouros J.G."/>
            <person name="Peat N."/>
            <person name="Hayles J."/>
            <person name="Baker S.G."/>
            <person name="Basham D."/>
            <person name="Bowman S."/>
            <person name="Brooks K."/>
            <person name="Brown D."/>
            <person name="Brown S."/>
            <person name="Chillingworth T."/>
            <person name="Churcher C.M."/>
            <person name="Collins M."/>
            <person name="Connor R."/>
            <person name="Cronin A."/>
            <person name="Davis P."/>
            <person name="Feltwell T."/>
            <person name="Fraser A."/>
            <person name="Gentles S."/>
            <person name="Goble A."/>
            <person name="Hamlin N."/>
            <person name="Harris D.E."/>
            <person name="Hidalgo J."/>
            <person name="Hodgson G."/>
            <person name="Holroyd S."/>
            <person name="Hornsby T."/>
            <person name="Howarth S."/>
            <person name="Huckle E.J."/>
            <person name="Hunt S."/>
            <person name="Jagels K."/>
            <person name="James K.D."/>
            <person name="Jones L."/>
            <person name="Jones M."/>
            <person name="Leather S."/>
            <person name="McDonald S."/>
            <person name="McLean J."/>
            <person name="Mooney P."/>
            <person name="Moule S."/>
            <person name="Mungall K.L."/>
            <person name="Murphy L.D."/>
            <person name="Niblett D."/>
            <person name="Odell C."/>
            <person name="Oliver K."/>
            <person name="O'Neil S."/>
            <person name="Pearson D."/>
            <person name="Quail M.A."/>
            <person name="Rabbinowitsch E."/>
            <person name="Rutherford K.M."/>
            <person name="Rutter S."/>
            <person name="Saunders D."/>
            <person name="Seeger K."/>
            <person name="Sharp S."/>
            <person name="Skelton J."/>
            <person name="Simmonds M.N."/>
            <person name="Squares R."/>
            <person name="Squares S."/>
            <person name="Stevens K."/>
            <person name="Taylor K."/>
            <person name="Taylor R.G."/>
            <person name="Tivey A."/>
            <person name="Walsh S.V."/>
            <person name="Warren T."/>
            <person name="Whitehead S."/>
            <person name="Woodward J.R."/>
            <person name="Volckaert G."/>
            <person name="Aert R."/>
            <person name="Robben J."/>
            <person name="Grymonprez B."/>
            <person name="Weltjens I."/>
            <person name="Vanstreels E."/>
            <person name="Rieger M."/>
            <person name="Schaefer M."/>
            <person name="Mueller-Auer S."/>
            <person name="Gabel C."/>
            <person name="Fuchs M."/>
            <person name="Duesterhoeft A."/>
            <person name="Fritzc C."/>
            <person name="Holzer E."/>
            <person name="Moestl D."/>
            <person name="Hilbert H."/>
            <person name="Borzym K."/>
            <person name="Langer I."/>
            <person name="Beck A."/>
            <person name="Lehrach H."/>
            <person name="Reinhardt R."/>
            <person name="Pohl T.M."/>
            <person name="Eger P."/>
            <person name="Zimmermann W."/>
            <person name="Wedler H."/>
            <person name="Wambutt R."/>
            <person name="Purnelle B."/>
            <person name="Goffeau A."/>
            <person name="Cadieu E."/>
            <person name="Dreano S."/>
            <person name="Gloux S."/>
            <person name="Lelaure V."/>
            <person name="Mottier S."/>
            <person name="Galibert F."/>
            <person name="Aves S.J."/>
            <person name="Xiang Z."/>
            <person name="Hunt C."/>
            <person name="Moore K."/>
            <person name="Hurst S.M."/>
            <person name="Lucas M."/>
            <person name="Rochet M."/>
            <person name="Gaillardin C."/>
            <person name="Tallada V.A."/>
            <person name="Garzon A."/>
            <person name="Thode G."/>
            <person name="Daga R.R."/>
            <person name="Cruzado L."/>
            <person name="Jimenez J."/>
            <person name="Sanchez M."/>
            <person name="del Rey F."/>
            <person name="Benito J."/>
            <person name="Dominguez A."/>
            <person name="Revuelta J.L."/>
            <person name="Moreno S."/>
            <person name="Armstrong J."/>
            <person name="Forsburg S.L."/>
            <person name="Cerutti L."/>
            <person name="Lowe T."/>
            <person name="McCombie W.R."/>
            <person name="Paulsen I."/>
            <person name="Potashkin J."/>
            <person name="Shpakovski G.V."/>
            <person name="Ussery D."/>
            <person name="Barrell B.G."/>
            <person name="Nurse P."/>
        </authorList>
    </citation>
    <scope>NUCLEOTIDE SEQUENCE [LARGE SCALE GENOMIC DNA]</scope>
    <source>
        <strain>972 / ATCC 24843</strain>
    </source>
</reference>
<reference key="2">
    <citation type="journal article" date="2001" name="Mol. Biol. Cell">
        <title>Peroxide sensors for the fission yeast stress-activated mitogen-activated protein kinase pathway.</title>
        <authorList>
            <person name="Buck V."/>
            <person name="Quinn J."/>
            <person name="Soto Pino T."/>
            <person name="Martin H."/>
            <person name="Saldanha J."/>
            <person name="Makino K."/>
            <person name="Morgan B.A."/>
            <person name="Millar J.B.A."/>
        </authorList>
    </citation>
    <scope>FUNCTION</scope>
    <scope>SUBCELLULAR LOCATION</scope>
</reference>
<reference key="3">
    <citation type="journal article" date="2001" name="Biosci. Biotechnol. Biochem.">
        <title>Genetic analysis of the His-to-Asp phosphorelay implicated in mitotic cell cycle control: involvement of histidine-kinase genes of Schizosaccharomyces pombe.</title>
        <authorList>
            <person name="Aoyama K."/>
            <person name="Aiba H."/>
            <person name="Mizuno T."/>
        </authorList>
    </citation>
    <scope>FUNCTION</scope>
</reference>
<reference key="4">
    <citation type="journal article" date="2008" name="J. Proteome Res.">
        <title>Phosphoproteome analysis of fission yeast.</title>
        <authorList>
            <person name="Wilson-Grady J.T."/>
            <person name="Villen J."/>
            <person name="Gygi S.P."/>
        </authorList>
    </citation>
    <scope>PHOSPHORYLATION [LARGE SCALE ANALYSIS] AT SER-12; SER-16 AND SER-17</scope>
    <scope>IDENTIFICATION BY MASS SPECTROMETRY</scope>
</reference>
<proteinExistence type="evidence at protein level"/>
<name>MAK3_SCHPO</name>
<feature type="chain" id="PRO_0000081410" description="Peroxide stress-activated histidine kinase mak3">
    <location>
        <begin position="1"/>
        <end position="2344"/>
    </location>
</feature>
<feature type="domain" description="Protein kinase" evidence="3">
    <location>
        <begin position="1"/>
        <end position="295"/>
    </location>
</feature>
<feature type="repeat" description="TPR 1">
    <location>
        <begin position="829"/>
        <end position="862"/>
    </location>
</feature>
<feature type="repeat" description="TPR 2">
    <location>
        <begin position="1340"/>
        <end position="1373"/>
    </location>
</feature>
<feature type="domain" description="PAC" evidence="2">
    <location>
        <begin position="1730"/>
        <end position="1781"/>
    </location>
</feature>
<feature type="domain" description="Histidine kinase" evidence="1">
    <location>
        <begin position="1792"/>
        <end position="2018"/>
    </location>
</feature>
<feature type="domain" description="Response regulatory" evidence="4">
    <location>
        <begin position="2211"/>
        <end position="2333"/>
    </location>
</feature>
<feature type="region of interest" description="Disordered" evidence="5">
    <location>
        <begin position="486"/>
        <end position="506"/>
    </location>
</feature>
<feature type="compositionally biased region" description="Polar residues" evidence="5">
    <location>
        <begin position="486"/>
        <end position="503"/>
    </location>
</feature>
<feature type="modified residue" description="Phosphoserine" evidence="8">
    <location>
        <position position="12"/>
    </location>
</feature>
<feature type="modified residue" description="Phosphoserine" evidence="8">
    <location>
        <position position="16"/>
    </location>
</feature>
<feature type="modified residue" description="Phosphoserine" evidence="8">
    <location>
        <position position="17"/>
    </location>
</feature>
<feature type="modified residue" description="Phosphohistidine; by autocatalysis" evidence="1">
    <location>
        <position position="1795"/>
    </location>
</feature>
<feature type="modified residue" description="4-aspartylphosphate" evidence="4">
    <location>
        <position position="2263"/>
    </location>
</feature>
<evidence type="ECO:0000255" key="1">
    <source>
        <dbReference type="PROSITE-ProRule" id="PRU00107"/>
    </source>
</evidence>
<evidence type="ECO:0000255" key="2">
    <source>
        <dbReference type="PROSITE-ProRule" id="PRU00141"/>
    </source>
</evidence>
<evidence type="ECO:0000255" key="3">
    <source>
        <dbReference type="PROSITE-ProRule" id="PRU00159"/>
    </source>
</evidence>
<evidence type="ECO:0000255" key="4">
    <source>
        <dbReference type="PROSITE-ProRule" id="PRU00169"/>
    </source>
</evidence>
<evidence type="ECO:0000256" key="5">
    <source>
        <dbReference type="SAM" id="MobiDB-lite"/>
    </source>
</evidence>
<evidence type="ECO:0000269" key="6">
    <source>
    </source>
</evidence>
<evidence type="ECO:0000269" key="7">
    <source>
    </source>
</evidence>
<evidence type="ECO:0000269" key="8">
    <source>
    </source>
</evidence>
<evidence type="ECO:0000305" key="9">
    <source>
    </source>
</evidence>
<sequence length="2344" mass="266850">MYSQHELRNKVSLALSSLLRYTFELTPFFELYEADFAYALYAGFELATNRKVVGKFSFQNVHLENEYNILTEIAKDERASKFSPTPIEFTSFPHIDLSACIAYDFGHGAELSTSYAYFRENPAEFVRFCIAICKCIEYLHSKGMVHGEIRLDSFIPISSYDNVYMLTVGSGASYFHNCLQAHNWRKYSEDSESMSRILFISPEQTGRTSYSVGYRTDIYSLGVLFFHYLSDCSPYTGSFVQRIRSILTEPLPDISKSCPKLPHLIFKIIEKMTRKNPDERYTSCSGIVNDLEACLDDIDKGLILNDHVLEKTGRTSLFYLPCSIYGREHEIKLIRKILRNSPRAINHQDKKDLETFNPYYLNAIESESSSQSLSLSQRASEVMPLVILITGCEGIGESSLIQTICDRREGYMAITKFEVSQSIVYSAIVSAVAEFIRQILAEDQLLLNNFFEELKNKLESDLYLLDSVFDLVPEIRSLLQQFSTSSGNTRKTSLLGSNHSSYSDKLGSPTILSTSFSLARPYPEPALVSPSTERPPRSSFSAALMTLLNIIASFKKVTMVIENIHLADESSLIILQKIVYSDLPLTLMITCDKENDHVINRFRLANDRIHEIELKPLSFNAVNSYVQATLHRTDDGLARFSSYVYHISKGVPLLVRNVLLSIYENKIIYFDWKKNRWEVNYDEMYTLDNDYSEPDAFMTAKKKISKLNDSSRAILGWASLLGPSFSFATVKKLCKDTDNIELNVEALQSALREGIIYATSSDDTYTFSRSIYVKAMRDLLNEAKIQIMHACLIDVCLKNRDRYNIFDIAFHINAAFDFVKGDKRSVEYCHYLHLAAEEALKIGANQEALDLYNRCIKMIPHEIPEESDDSYIRCQLIGMYVGCAEAYWVNDNFDTASEMLKLAEEKACNNSEVFPARFLYSRILFEGVHIEECTQYVLSCLKPLGYELKRHSLEDSKSIISALIPRIIDKITKSSEESQSSTDDDDRRIFEILSFLYVGSVATSYFSETAEMAIDFGIAQVEFFLSTVVNSFSAFALVYFAILANSLLEPSEDILFIGNYGEKLNREAENPIIFSRTEYLYVQSLGFIDSTTKERRLTIDYLDRNCVTCSDKHVIISLLLVSSWEKFLTSNNYSNYLADFETTHAQIMEMKPWVGDTSLITQLKRFLMCLQDNIKLDLIKSKSFLSDHNIQLSSPAAQESAKLAFSLHGWINSWYLLALVMHGEWDMAISYGENFKREFKNALLTSSRVFGIFMFTWSLVNKMLICPEFTKQKKYYEQYKENLGFFDSLCIGDNECITRVYFLLLKACGLIMNGLNFEASVMLEEVISLTEKLELFLLQAFAFETVGSIFVSMELYTSATQYLEEAIRNYAALGVKQKARHLRDKFGDLLVSNNLQVSIDEATQTDFPLVFSPERSSIDINASSMRSEKASFEIPFPEEQIDDDVSPVAQDSSLEELLISLDIIDLTSVMRSCQTIASEIELTGLLSTMTQRMLEDSSANAAVIAIRDDVGFKIAAYRTGELNEVFAPPMPITEDQTYVPSRVINYVVHTQKALFSNNINHEFDLQQERWNIENHMGRSVIAIPLYQKKEVFAILYLQGPPSAFHSRHMSVLSILGAQASFAIVNISLFHKVKEATNVNTIIIKAQREALNLVQKSEAKYRSFVDTMPCLLSKLEFDEELRIELFGSFWKEYCGELNINDPNTWKEYVHLDDHLKLQDFLLSHLHNPLPFELEIRIKRKDGVYRWNLTRCTPTTNEKNRTSFLCATIDIDDQKKARATALELARLRSNFLANISHELRTPFSGFYGMLSLLDDTNLDSEQRDIVSAARISCEMLLRVINDLLNFSKLEAGKVTLESDLEFSLESVVCDCMQSVYSACAEKGINLSYNVSPDIPFFTAGDGMKIGQMLKSILDNSVKTVNNGFIRVRAFLAGSSKKNDRDQLQIAFIVEDTREESNAIFLANMINSLNRGCNDYLPMDLSGTALGMSTCLQLCKIMGGSVSVEVSQNNPTFKICYDLKIHELGKERYDIIATPLFQNLTEFNDLIKSKVAIRVSKTSTEYDNITTYLQAARKVLHVFKGLQDLASIFDLSPDSALLRCSVVVVDVYSMDDVKAVEKILKSYPDVHVIYLCCDPSRLNIEQELQKPSGRSFACKKRWGFLQMPCTRENFLKVTLQVFKSNEDTCNFYSYVNEYGESPKPDDDMDRLNKCVGSKILIAEDNPIVRMTLKKQLEHLGMDVDAAEDGKETLQIFESHPDNYYQVCFVDYHMPVYDGLEVTRRMRKIERKHGCAPLPIFALTADMQPTMETQFQEVGITHYLSKPFKKETLIKMLLQYLVNGTDGNANTS</sequence>
<keyword id="KW-0067">ATP-binding</keyword>
<keyword id="KW-0963">Cytoplasm</keyword>
<keyword id="KW-0418">Kinase</keyword>
<keyword id="KW-0547">Nucleotide-binding</keyword>
<keyword id="KW-0597">Phosphoprotein</keyword>
<keyword id="KW-1185">Reference proteome</keyword>
<keyword id="KW-0677">Repeat</keyword>
<keyword id="KW-0802">TPR repeat</keyword>
<keyword id="KW-0808">Transferase</keyword>
<keyword id="KW-0902">Two-component regulatory system</keyword>
<comment type="function">
    <text evidence="6 7">Involved in the control of the SAPK-dependent transcriptional response to peroxide stress. Regulates sty1 activity.</text>
</comment>
<comment type="catalytic activity">
    <reaction>
        <text>ATP + protein L-histidine = ADP + protein N-phospho-L-histidine.</text>
        <dbReference type="EC" id="2.7.13.3"/>
    </reaction>
</comment>
<comment type="subcellular location">
    <subcellularLocation>
        <location evidence="9">Cytoplasm</location>
    </subcellularLocation>
</comment>
<gene>
    <name type="primary">mak3</name>
    <name type="synonym">phk2</name>
    <name type="ORF">SPCC74.06</name>
</gene>